<dbReference type="EMBL" id="AE010299">
    <property type="protein sequence ID" value="AAM03733.1"/>
    <property type="molecule type" value="Genomic_DNA"/>
</dbReference>
<dbReference type="RefSeq" id="WP_011020338.1">
    <property type="nucleotide sequence ID" value="NC_003552.1"/>
</dbReference>
<dbReference type="PDB" id="3CFX">
    <property type="method" value="X-ray"/>
    <property type="resolution" value="1.60 A"/>
    <property type="chains" value="A/B=40-332"/>
</dbReference>
<dbReference type="PDB" id="3K6U">
    <property type="method" value="X-ray"/>
    <property type="resolution" value="1.95 A"/>
    <property type="chains" value="A=27-352"/>
</dbReference>
<dbReference type="PDB" id="3K6V">
    <property type="method" value="X-ray"/>
    <property type="resolution" value="1.69 A"/>
    <property type="chains" value="A=27-352"/>
</dbReference>
<dbReference type="PDB" id="3K6W">
    <property type="method" value="X-ray"/>
    <property type="resolution" value="2.45 A"/>
    <property type="chains" value="A=27-352"/>
</dbReference>
<dbReference type="PDB" id="3K6X">
    <property type="method" value="X-ray"/>
    <property type="resolution" value="2.25 A"/>
    <property type="chains" value="A/B=27-352"/>
</dbReference>
<dbReference type="PDBsum" id="3CFX"/>
<dbReference type="PDBsum" id="3K6U"/>
<dbReference type="PDBsum" id="3K6V"/>
<dbReference type="PDBsum" id="3K6W"/>
<dbReference type="PDBsum" id="3K6X"/>
<dbReference type="SMR" id="Q8TTZ5"/>
<dbReference type="STRING" id="188937.MA_0280"/>
<dbReference type="EnsemblBacteria" id="AAM03733">
    <property type="protein sequence ID" value="AAM03733"/>
    <property type="gene ID" value="MA_0280"/>
</dbReference>
<dbReference type="GeneID" id="1472172"/>
<dbReference type="KEGG" id="mac:MA_0280"/>
<dbReference type="HOGENOM" id="CLU_055936_0_0_2"/>
<dbReference type="InParanoid" id="Q8TTZ5"/>
<dbReference type="OrthoDB" id="7820at2157"/>
<dbReference type="PhylomeDB" id="Q8TTZ5"/>
<dbReference type="EvolutionaryTrace" id="Q8TTZ5"/>
<dbReference type="Proteomes" id="UP000002487">
    <property type="component" value="Chromosome"/>
</dbReference>
<dbReference type="GO" id="GO:0030973">
    <property type="term" value="F:molybdate ion binding"/>
    <property type="evidence" value="ECO:0000318"/>
    <property type="project" value="GO_Central"/>
</dbReference>
<dbReference type="GO" id="GO:1901359">
    <property type="term" value="F:tungstate binding"/>
    <property type="evidence" value="ECO:0007669"/>
    <property type="project" value="InterPro"/>
</dbReference>
<dbReference type="GO" id="GO:0015689">
    <property type="term" value="P:molybdate ion transport"/>
    <property type="evidence" value="ECO:0000318"/>
    <property type="project" value="GO_Central"/>
</dbReference>
<dbReference type="CDD" id="cd13540">
    <property type="entry name" value="PBP2_ModA_WtpA"/>
    <property type="match status" value="1"/>
</dbReference>
<dbReference type="FunFam" id="3.40.190.10:FF:000440">
    <property type="entry name" value="Uncharacterized solute-binding protein MA_0280"/>
    <property type="match status" value="1"/>
</dbReference>
<dbReference type="Gene3D" id="3.40.190.10">
    <property type="entry name" value="Periplasmic binding protein-like II"/>
    <property type="match status" value="2"/>
</dbReference>
<dbReference type="InterPro" id="IPR022498">
    <property type="entry name" value="ABC_trnspt_W-bd_WtpA"/>
</dbReference>
<dbReference type="InterPro" id="IPR050682">
    <property type="entry name" value="ModA/WtpA"/>
</dbReference>
<dbReference type="NCBIfam" id="NF003196">
    <property type="entry name" value="PRK04168.1"/>
    <property type="match status" value="1"/>
</dbReference>
<dbReference type="NCBIfam" id="TIGR03730">
    <property type="entry name" value="tungstate_WtpA"/>
    <property type="match status" value="1"/>
</dbReference>
<dbReference type="PANTHER" id="PTHR30632">
    <property type="entry name" value="MOLYBDATE-BINDING PERIPLASMIC PROTEIN"/>
    <property type="match status" value="1"/>
</dbReference>
<dbReference type="PANTHER" id="PTHR30632:SF16">
    <property type="entry name" value="MOLYBDATE_TUNGSTATE-BINDING PROTEIN WTPA"/>
    <property type="match status" value="1"/>
</dbReference>
<dbReference type="Pfam" id="PF13531">
    <property type="entry name" value="SBP_bac_11"/>
    <property type="match status" value="1"/>
</dbReference>
<dbReference type="SUPFAM" id="SSF53850">
    <property type="entry name" value="Periplasmic binding protein-like II"/>
    <property type="match status" value="1"/>
</dbReference>
<organism>
    <name type="scientific">Methanosarcina acetivorans (strain ATCC 35395 / DSM 2834 / JCM 12185 / C2A)</name>
    <dbReference type="NCBI Taxonomy" id="188937"/>
    <lineage>
        <taxon>Archaea</taxon>
        <taxon>Methanobacteriati</taxon>
        <taxon>Methanobacteriota</taxon>
        <taxon>Stenosarchaea group</taxon>
        <taxon>Methanomicrobia</taxon>
        <taxon>Methanosarcinales</taxon>
        <taxon>Methanosarcinaceae</taxon>
        <taxon>Methanosarcina</taxon>
    </lineage>
</organism>
<reference key="1">
    <citation type="journal article" date="2002" name="Genome Res.">
        <title>The genome of Methanosarcina acetivorans reveals extensive metabolic and physiological diversity.</title>
        <authorList>
            <person name="Galagan J.E."/>
            <person name="Nusbaum C."/>
            <person name="Roy A."/>
            <person name="Endrizzi M.G."/>
            <person name="Macdonald P."/>
            <person name="FitzHugh W."/>
            <person name="Calvo S."/>
            <person name="Engels R."/>
            <person name="Smirnov S."/>
            <person name="Atnoor D."/>
            <person name="Brown A."/>
            <person name="Allen N."/>
            <person name="Naylor J."/>
            <person name="Stange-Thomann N."/>
            <person name="DeArellano K."/>
            <person name="Johnson R."/>
            <person name="Linton L."/>
            <person name="McEwan P."/>
            <person name="McKernan K."/>
            <person name="Talamas J."/>
            <person name="Tirrell A."/>
            <person name="Ye W."/>
            <person name="Zimmer A."/>
            <person name="Barber R.D."/>
            <person name="Cann I."/>
            <person name="Graham D.E."/>
            <person name="Grahame D.A."/>
            <person name="Guss A.M."/>
            <person name="Hedderich R."/>
            <person name="Ingram-Smith C."/>
            <person name="Kuettner H.C."/>
            <person name="Krzycki J.A."/>
            <person name="Leigh J.A."/>
            <person name="Li W."/>
            <person name="Liu J."/>
            <person name="Mukhopadhyay B."/>
            <person name="Reeve J.N."/>
            <person name="Smith K."/>
            <person name="Springer T.A."/>
            <person name="Umayam L.A."/>
            <person name="White O."/>
            <person name="White R.H."/>
            <person name="de Macario E.C."/>
            <person name="Ferry J.G."/>
            <person name="Jarrell K.F."/>
            <person name="Jing H."/>
            <person name="Macario A.J.L."/>
            <person name="Paulsen I.T."/>
            <person name="Pritchett M."/>
            <person name="Sowers K.R."/>
            <person name="Swanson R.V."/>
            <person name="Zinder S.H."/>
            <person name="Lander E."/>
            <person name="Metcalf W.W."/>
            <person name="Birren B."/>
        </authorList>
    </citation>
    <scope>NUCLEOTIDE SEQUENCE [LARGE SCALE GENOMIC DNA]</scope>
    <source>
        <strain>ATCC 35395 / DSM 2834 / JCM 12185 / C2A</strain>
    </source>
</reference>
<gene>
    <name type="ordered locus">MA_0280</name>
</gene>
<protein>
    <recommendedName>
        <fullName>Uncharacterized solute-binding protein MA_0280</fullName>
    </recommendedName>
</protein>
<evidence type="ECO:0000255" key="1"/>
<evidence type="ECO:0000305" key="2"/>
<evidence type="ECO:0007829" key="3">
    <source>
        <dbReference type="PDB" id="3CFX"/>
    </source>
</evidence>
<evidence type="ECO:0007829" key="4">
    <source>
        <dbReference type="PDB" id="3K6U"/>
    </source>
</evidence>
<evidence type="ECO:0007829" key="5">
    <source>
        <dbReference type="PDB" id="3K6V"/>
    </source>
</evidence>
<evidence type="ECO:0007829" key="6">
    <source>
        <dbReference type="PDB" id="3K6X"/>
    </source>
</evidence>
<comment type="similarity">
    <text evidence="2">Belongs to the bacterial solute-binding protein 1 family. WtpA subfamily.</text>
</comment>
<keyword id="KW-0002">3D-structure</keyword>
<keyword id="KW-1185">Reference proteome</keyword>
<keyword id="KW-0732">Signal</keyword>
<proteinExistence type="evidence at protein level"/>
<name>Y280_METAC</name>
<sequence>MNVDSRVFRFFLVFLILVVVASPGCVDNQPEPGNTSAGEGEVLTVFHAGSLSVPFEELEAEFEAQHPGVDVQREAAGSAQSVRKITELGKKADVLASADYALIPSLMVPEYADWYAAFARNQMILAYTNESKYGDEINTDNWYEILRRPDVRYGFSNPNDDPAGYRSQMVTQLAESYYNDDMIYDDLMLANTGMTLTTEENGTALIHVPASEEISPNTSKIMLRSMEVELSSALETGEIDYLYIYRSVAEQHGFEYVALPPAIDLSSLEYADNYSKVQVEMVNGEVVTGSPIVYGVTIPNNAENSELATEFVALLLGETGQQIFIENGQPPIVPAIAEGKDSMPEELQALVV</sequence>
<feature type="signal peptide" evidence="1">
    <location>
        <begin position="1"/>
        <end position="21"/>
    </location>
</feature>
<feature type="chain" id="PRO_0000159719" description="Uncharacterized solute-binding protein MA_0280">
    <location>
        <begin position="22"/>
        <end position="352"/>
    </location>
</feature>
<feature type="strand" evidence="3">
    <location>
        <begin position="42"/>
        <end position="47"/>
    </location>
</feature>
<feature type="helix" evidence="3">
    <location>
        <begin position="49"/>
        <end position="51"/>
    </location>
</feature>
<feature type="helix" evidence="3">
    <location>
        <begin position="52"/>
        <end position="65"/>
    </location>
</feature>
<feature type="strand" evidence="3">
    <location>
        <begin position="70"/>
        <end position="75"/>
    </location>
</feature>
<feature type="helix" evidence="3">
    <location>
        <begin position="78"/>
        <end position="86"/>
    </location>
</feature>
<feature type="strand" evidence="3">
    <location>
        <begin position="93"/>
        <end position="99"/>
    </location>
</feature>
<feature type="helix" evidence="3">
    <location>
        <begin position="102"/>
        <end position="106"/>
    </location>
</feature>
<feature type="turn" evidence="3">
    <location>
        <begin position="107"/>
        <end position="111"/>
    </location>
</feature>
<feature type="strand" evidence="3">
    <location>
        <begin position="115"/>
        <end position="120"/>
    </location>
</feature>
<feature type="strand" evidence="3">
    <location>
        <begin position="123"/>
        <end position="127"/>
    </location>
</feature>
<feature type="turn" evidence="3">
    <location>
        <begin position="132"/>
        <end position="136"/>
    </location>
</feature>
<feature type="turn" evidence="3">
    <location>
        <begin position="139"/>
        <end position="141"/>
    </location>
</feature>
<feature type="helix" evidence="3">
    <location>
        <begin position="142"/>
        <end position="147"/>
    </location>
</feature>
<feature type="strand" evidence="3">
    <location>
        <begin position="153"/>
        <end position="156"/>
    </location>
</feature>
<feature type="turn" evidence="3">
    <location>
        <begin position="158"/>
        <end position="160"/>
    </location>
</feature>
<feature type="helix" evidence="3">
    <location>
        <begin position="162"/>
        <end position="177"/>
    </location>
</feature>
<feature type="helix" evidence="3">
    <location>
        <begin position="183"/>
        <end position="187"/>
    </location>
</feature>
<feature type="helix" evidence="3">
    <location>
        <begin position="189"/>
        <end position="191"/>
    </location>
</feature>
<feature type="strand" evidence="3">
    <location>
        <begin position="195"/>
        <end position="198"/>
    </location>
</feature>
<feature type="turn" evidence="4">
    <location>
        <begin position="200"/>
        <end position="202"/>
    </location>
</feature>
<feature type="strand" evidence="3">
    <location>
        <begin position="204"/>
        <end position="207"/>
    </location>
</feature>
<feature type="helix" evidence="3">
    <location>
        <begin position="211"/>
        <end position="213"/>
    </location>
</feature>
<feature type="turn" evidence="3">
    <location>
        <begin position="218"/>
        <end position="220"/>
    </location>
</feature>
<feature type="strand" evidence="3">
    <location>
        <begin position="221"/>
        <end position="226"/>
    </location>
</feature>
<feature type="helix" evidence="3">
    <location>
        <begin position="227"/>
        <end position="230"/>
    </location>
</feature>
<feature type="helix" evidence="3">
    <location>
        <begin position="231"/>
        <end position="235"/>
    </location>
</feature>
<feature type="strand" evidence="3">
    <location>
        <begin position="240"/>
        <end position="245"/>
    </location>
</feature>
<feature type="helix" evidence="3">
    <location>
        <begin position="246"/>
        <end position="252"/>
    </location>
</feature>
<feature type="strand" evidence="3">
    <location>
        <begin position="255"/>
        <end position="257"/>
    </location>
</feature>
<feature type="turn" evidence="3">
    <location>
        <begin position="261"/>
        <end position="263"/>
    </location>
</feature>
<feature type="helix" evidence="3">
    <location>
        <begin position="268"/>
        <end position="270"/>
    </location>
</feature>
<feature type="helix" evidence="3">
    <location>
        <begin position="271"/>
        <end position="274"/>
    </location>
</feature>
<feature type="strand" evidence="3">
    <location>
        <begin position="277"/>
        <end position="280"/>
    </location>
</feature>
<feature type="strand" evidence="3">
    <location>
        <begin position="286"/>
        <end position="288"/>
    </location>
</feature>
<feature type="strand" evidence="3">
    <location>
        <begin position="293"/>
        <end position="297"/>
    </location>
</feature>
<feature type="helix" evidence="3">
    <location>
        <begin position="305"/>
        <end position="316"/>
    </location>
</feature>
<feature type="helix" evidence="3">
    <location>
        <begin position="318"/>
        <end position="326"/>
    </location>
</feature>
<feature type="strand" evidence="5">
    <location>
        <begin position="331"/>
        <end position="339"/>
    </location>
</feature>
<feature type="helix" evidence="5">
    <location>
        <begin position="340"/>
        <end position="342"/>
    </location>
</feature>
<feature type="helix" evidence="5">
    <location>
        <begin position="345"/>
        <end position="348"/>
    </location>
</feature>
<feature type="strand" evidence="6">
    <location>
        <begin position="350"/>
        <end position="352"/>
    </location>
</feature>
<accession>Q8TTZ5</accession>